<accession>Q98277</accession>
<organism>
    <name type="scientific">Molluscum contagiosum virus subtype 1</name>
    <name type="common">MOCV</name>
    <name type="synonym">MCVI</name>
    <dbReference type="NCBI Taxonomy" id="10280"/>
    <lineage>
        <taxon>Viruses</taxon>
        <taxon>Varidnaviria</taxon>
        <taxon>Bamfordvirae</taxon>
        <taxon>Nucleocytoviricota</taxon>
        <taxon>Pokkesviricetes</taxon>
        <taxon>Chitovirales</taxon>
        <taxon>Poxviridae</taxon>
        <taxon>Chordopoxvirinae</taxon>
        <taxon>Molluscipoxvirus</taxon>
        <taxon>Molluscum contagiosum virus</taxon>
    </lineage>
</organism>
<gene>
    <name type="primary">VETFL</name>
    <name type="ordered locus">MC110L</name>
</gene>
<keyword id="KW-0010">Activator</keyword>
<keyword id="KW-0238">DNA-binding</keyword>
<keyword id="KW-1185">Reference proteome</keyword>
<keyword id="KW-0804">Transcription</keyword>
<keyword id="KW-0805">Transcription regulation</keyword>
<keyword id="KW-0946">Virion</keyword>
<evidence type="ECO:0000250" key="1"/>
<evidence type="ECO:0000305" key="2"/>
<feature type="chain" id="PRO_0000099085" description="Early transcription factor 82 kDa subunit">
    <location>
        <begin position="1"/>
        <end position="707"/>
    </location>
</feature>
<name>ETF2_MCV1</name>
<reference key="1">
    <citation type="journal article" date="1996" name="Science">
        <title>Genome sequence of a human tumorigenic poxvirus: prediction of specific host response-evasion genes.</title>
        <authorList>
            <person name="Senkevich T.G."/>
            <person name="Bugert J.J."/>
            <person name="Sisler J.R."/>
            <person name="Koonin E.V."/>
            <person name="Darai G."/>
            <person name="Moss B."/>
        </authorList>
    </citation>
    <scope>NUCLEOTIDE SEQUENCE [LARGE SCALE GENOMIC DNA]</scope>
</reference>
<organismHost>
    <name type="scientific">Homo sapiens</name>
    <name type="common">Human</name>
    <dbReference type="NCBI Taxonomy" id="9606"/>
</organismHost>
<protein>
    <recommendedName>
        <fullName>Early transcription factor 82 kDa subunit</fullName>
    </recommendedName>
    <alternativeName>
        <fullName>ETF large subunit</fullName>
    </alternativeName>
</protein>
<proteinExistence type="inferred from homology"/>
<sequence length="707" mass="82104">MYTVNPQLVVLVDRQQQLREVRYLSLYGTLDEASPLYYFAKQHLRAETLAVERRHILLTLKISQLKGYLCHLLGLREDIIIYSHKNNLEYSYVDNTIFNPFTMTQKKTLIKADSFLYNVYVDACDFLVVWVARAQDTPVPEFGSFEEVDANILKFEARLVEMFPELDLEFSIQSKFNNVFRTNLRSTGLRNIVKRNQDNRILFIKTDEFFITMSGNHFVLNNEALNLSIWDAQGRLAISSDGDTITVNDVRLFTELVTDSNLQMERIKGDITYRIFLLSPITSKIKLDIETSFIFVETATNNILLSADKKISIILAKNHISIKVKNHIPNIEKYFTFLVIFINRMFNAVQQAVDFTKIETIYWSRICQNTRDKNRKPVIVSSLDANMERVSDNFFRSPTREVFVNSNNIMFSCVDPLGKYNSVGFLAIFYKLQKMCIPCCFLRSQAHTDTFISCVHHRELDRQLVSPYVLNFGKIVTEAKISFLPILFDQFFNEGLRIEFEADHKRLKATDGYHVVKCCTRSEITRLRTQRDIIQFVNAEQNTLIAGDMVYFPMHGARSAGAEHQRVYILIQEIVHEVVMVQKAHDSDRIRFRELERNRLWEFFPYRVPSARIKEEHGLVLTTDGFYVDGKLFSEPLSTRYVAFTENVGTAGVAAKYFAPVFKYVVTEARELFIKTWLLNVMMQLGLTGESSAAQTREALERYYRLS</sequence>
<dbReference type="EMBL" id="U60315">
    <property type="protein sequence ID" value="AAC55238.1"/>
    <property type="molecule type" value="Genomic_DNA"/>
</dbReference>
<dbReference type="PIR" id="T30712">
    <property type="entry name" value="T30712"/>
</dbReference>
<dbReference type="RefSeq" id="NP_044061.1">
    <property type="nucleotide sequence ID" value="NC_001731.1"/>
</dbReference>
<dbReference type="SMR" id="Q98277"/>
<dbReference type="GeneID" id="1487129"/>
<dbReference type="KEGG" id="vg:1487129"/>
<dbReference type="OrthoDB" id="696at10239"/>
<dbReference type="Proteomes" id="UP000000869">
    <property type="component" value="Genome"/>
</dbReference>
<dbReference type="GO" id="GO:0044423">
    <property type="term" value="C:virion component"/>
    <property type="evidence" value="ECO:0007669"/>
    <property type="project" value="UniProtKB-KW"/>
</dbReference>
<dbReference type="GO" id="GO:0003677">
    <property type="term" value="F:DNA binding"/>
    <property type="evidence" value="ECO:0007669"/>
    <property type="project" value="UniProtKB-KW"/>
</dbReference>
<dbReference type="GO" id="GO:0045893">
    <property type="term" value="P:positive regulation of DNA-templated transcription"/>
    <property type="evidence" value="ECO:0007669"/>
    <property type="project" value="InterPro"/>
</dbReference>
<dbReference type="InterPro" id="IPR007532">
    <property type="entry name" value="Poxvirus_early-TF_lsu"/>
</dbReference>
<dbReference type="Pfam" id="PF04441">
    <property type="entry name" value="Pox_VERT_large"/>
    <property type="match status" value="1"/>
</dbReference>
<comment type="function">
    <text evidence="1">Acts with RNA polymerase to initiate transcription from early gene promoters. Is recruited by the RPO-associated protein of 94 kDa (RAP94) to form the early transcription complex, which also contains the core RNA polymerase. ETF heterodimer binds to early gene promoters (By similarity).</text>
</comment>
<comment type="subunit">
    <text evidence="1">Heterodimer of a 70 kDa and a 82 kDa subunit. Part of the early transcription complex composed of ETF, RAP94, and the DNA-directed RNA polymerase (By similarity).</text>
</comment>
<comment type="subcellular location">
    <subcellularLocation>
        <location evidence="1">Virion</location>
    </subcellularLocation>
    <text evidence="1">All the enzymes and other proteins required to synthesize early mRNAs are packaged within the virion core along with the DNA genome. This is necessary because viral early mRNAs are synthesized within minutes after virus entry into the cell and are extruded through pores in the core particle (By similarity).</text>
</comment>
<comment type="similarity">
    <text evidence="2">Belongs to the poxviridae VETF large subunit family.</text>
</comment>